<dbReference type="EMBL" id="Y12879">
    <property type="protein sequence ID" value="CAA73379.1"/>
    <property type="molecule type" value="mRNA"/>
</dbReference>
<dbReference type="EMBL" id="AK028281">
    <property type="protein sequence ID" value="BAC25855.1"/>
    <property type="molecule type" value="mRNA"/>
</dbReference>
<dbReference type="EMBL" id="AK145960">
    <property type="protein sequence ID" value="BAE26786.1"/>
    <property type="molecule type" value="mRNA"/>
</dbReference>
<dbReference type="EMBL" id="AK147166">
    <property type="protein sequence ID" value="BAE27731.1"/>
    <property type="molecule type" value="mRNA"/>
</dbReference>
<dbReference type="EMBL" id="AK157140">
    <property type="protein sequence ID" value="BAE33976.1"/>
    <property type="molecule type" value="mRNA"/>
</dbReference>
<dbReference type="EMBL" id="CH466587">
    <property type="protein sequence ID" value="EDL09123.1"/>
    <property type="molecule type" value="Genomic_DNA"/>
</dbReference>
<dbReference type="EMBL" id="BC113146">
    <property type="protein sequence ID" value="AAI13147.1"/>
    <property type="molecule type" value="mRNA"/>
</dbReference>
<dbReference type="CCDS" id="CCDS23640.1"/>
<dbReference type="RefSeq" id="NP_001263648.1">
    <property type="nucleotide sequence ID" value="NM_001276719.2"/>
</dbReference>
<dbReference type="RefSeq" id="NP_067622.2">
    <property type="nucleotide sequence ID" value="NM_021609.4"/>
</dbReference>
<dbReference type="RefSeq" id="XP_006512266.1">
    <property type="nucleotide sequence ID" value="XM_006512203.5"/>
</dbReference>
<dbReference type="RefSeq" id="XP_006512267.1">
    <property type="nucleotide sequence ID" value="XM_006512204.3"/>
</dbReference>
<dbReference type="SMR" id="O08707"/>
<dbReference type="FunCoup" id="O08707">
    <property type="interactions" value="385"/>
</dbReference>
<dbReference type="STRING" id="10090.ENSMUSP00000148966"/>
<dbReference type="GlyCosmos" id="O08707">
    <property type="glycosylation" value="1 site, No reported glycans"/>
</dbReference>
<dbReference type="GlyGen" id="O08707">
    <property type="glycosylation" value="2 sites"/>
</dbReference>
<dbReference type="PhosphoSitePlus" id="O08707"/>
<dbReference type="PaxDb" id="10090-ENSMUSP00000050119"/>
<dbReference type="ProteomicsDB" id="285934"/>
<dbReference type="Antibodypedia" id="2896">
    <property type="antibodies" value="434 antibodies from 36 providers"/>
</dbReference>
<dbReference type="DNASU" id="59289"/>
<dbReference type="Ensembl" id="ENSMUST00000050327.5">
    <property type="protein sequence ID" value="ENSMUSP00000050119.4"/>
    <property type="gene ID" value="ENSMUSG00000044534.9"/>
</dbReference>
<dbReference type="Ensembl" id="ENSMUST00000214340.2">
    <property type="protein sequence ID" value="ENSMUSP00000148966.2"/>
    <property type="gene ID" value="ENSMUSG00000044534.9"/>
</dbReference>
<dbReference type="GeneID" id="59289"/>
<dbReference type="KEGG" id="mmu:59289"/>
<dbReference type="UCSC" id="uc009sed.2">
    <property type="organism name" value="mouse"/>
</dbReference>
<dbReference type="AGR" id="MGI:1891697"/>
<dbReference type="CTD" id="1238"/>
<dbReference type="MGI" id="MGI:1891697">
    <property type="gene designation" value="Ackr2"/>
</dbReference>
<dbReference type="VEuPathDB" id="HostDB:ENSMUSG00000044534"/>
<dbReference type="eggNOG" id="KOG3656">
    <property type="taxonomic scope" value="Eukaryota"/>
</dbReference>
<dbReference type="GeneTree" id="ENSGT01020000230359"/>
<dbReference type="HOGENOM" id="CLU_009579_8_3_1"/>
<dbReference type="InParanoid" id="O08707"/>
<dbReference type="OMA" id="IVHAQPH"/>
<dbReference type="OrthoDB" id="8576531at2759"/>
<dbReference type="PhylomeDB" id="O08707"/>
<dbReference type="TreeFam" id="TF330966"/>
<dbReference type="Reactome" id="R-MMU-380108">
    <property type="pathway name" value="Chemokine receptors bind chemokines"/>
</dbReference>
<dbReference type="BioGRID-ORCS" id="59289">
    <property type="hits" value="1 hit in 78 CRISPR screens"/>
</dbReference>
<dbReference type="ChiTaRS" id="Ackr2">
    <property type="organism name" value="mouse"/>
</dbReference>
<dbReference type="PRO" id="PR:O08707"/>
<dbReference type="Proteomes" id="UP000000589">
    <property type="component" value="Chromosome 9"/>
</dbReference>
<dbReference type="RNAct" id="O08707">
    <property type="molecule type" value="protein"/>
</dbReference>
<dbReference type="Bgee" id="ENSMUSG00000044534">
    <property type="expression patterns" value="Expressed in right lung lobe and 100 other cell types or tissues"/>
</dbReference>
<dbReference type="ExpressionAtlas" id="O08707">
    <property type="expression patterns" value="baseline and differential"/>
</dbReference>
<dbReference type="GO" id="GO:0005884">
    <property type="term" value="C:actin filament"/>
    <property type="evidence" value="ECO:0000250"/>
    <property type="project" value="UniProtKB"/>
</dbReference>
<dbReference type="GO" id="GO:0005829">
    <property type="term" value="C:cytosol"/>
    <property type="evidence" value="ECO:0007669"/>
    <property type="project" value="Ensembl"/>
</dbReference>
<dbReference type="GO" id="GO:0005769">
    <property type="term" value="C:early endosome"/>
    <property type="evidence" value="ECO:0007669"/>
    <property type="project" value="UniProtKB-SubCell"/>
</dbReference>
<dbReference type="GO" id="GO:0031965">
    <property type="term" value="C:nuclear membrane"/>
    <property type="evidence" value="ECO:0007669"/>
    <property type="project" value="Ensembl"/>
</dbReference>
<dbReference type="GO" id="GO:0005654">
    <property type="term" value="C:nucleoplasm"/>
    <property type="evidence" value="ECO:0007669"/>
    <property type="project" value="Ensembl"/>
</dbReference>
<dbReference type="GO" id="GO:0005886">
    <property type="term" value="C:plasma membrane"/>
    <property type="evidence" value="ECO:0000250"/>
    <property type="project" value="UniProtKB"/>
</dbReference>
<dbReference type="GO" id="GO:0055037">
    <property type="term" value="C:recycling endosome"/>
    <property type="evidence" value="ECO:0007669"/>
    <property type="project" value="UniProtKB-SubCell"/>
</dbReference>
<dbReference type="GO" id="GO:0019957">
    <property type="term" value="F:C-C chemokine binding"/>
    <property type="evidence" value="ECO:0000353"/>
    <property type="project" value="BHF-UCL"/>
</dbReference>
<dbReference type="GO" id="GO:0016493">
    <property type="term" value="F:C-C chemokine receptor activity"/>
    <property type="evidence" value="ECO:0000314"/>
    <property type="project" value="MGI"/>
</dbReference>
<dbReference type="GO" id="GO:0005044">
    <property type="term" value="F:scavenger receptor activity"/>
    <property type="evidence" value="ECO:0000250"/>
    <property type="project" value="UniProtKB"/>
</dbReference>
<dbReference type="GO" id="GO:0006935">
    <property type="term" value="P:chemotaxis"/>
    <property type="evidence" value="ECO:0007669"/>
    <property type="project" value="InterPro"/>
</dbReference>
<dbReference type="GO" id="GO:0006954">
    <property type="term" value="P:inflammatory response"/>
    <property type="evidence" value="ECO:0007669"/>
    <property type="project" value="UniProtKB-KW"/>
</dbReference>
<dbReference type="GO" id="GO:0007165">
    <property type="term" value="P:signal transduction"/>
    <property type="evidence" value="ECO:0000314"/>
    <property type="project" value="MGI"/>
</dbReference>
<dbReference type="FunFam" id="1.20.1070.10:FF:000246">
    <property type="entry name" value="Atypical chemokine receptor 2"/>
    <property type="match status" value="1"/>
</dbReference>
<dbReference type="Gene3D" id="1.20.1070.10">
    <property type="entry name" value="Rhodopsin 7-helix transmembrane proteins"/>
    <property type="match status" value="1"/>
</dbReference>
<dbReference type="InterPro" id="IPR050119">
    <property type="entry name" value="CCR1-9-like"/>
</dbReference>
<dbReference type="InterPro" id="IPR000355">
    <property type="entry name" value="Chemokine_rcpt"/>
</dbReference>
<dbReference type="InterPro" id="IPR001277">
    <property type="entry name" value="CXCR4/ACKR2"/>
</dbReference>
<dbReference type="InterPro" id="IPR000276">
    <property type="entry name" value="GPCR_Rhodpsn"/>
</dbReference>
<dbReference type="InterPro" id="IPR017452">
    <property type="entry name" value="GPCR_Rhodpsn_7TM"/>
</dbReference>
<dbReference type="PANTHER" id="PTHR10489:SF942">
    <property type="entry name" value="ATYPICAL CHEMOKINE RECEPTOR 2"/>
    <property type="match status" value="1"/>
</dbReference>
<dbReference type="PANTHER" id="PTHR10489">
    <property type="entry name" value="CELL ADHESION MOLECULE"/>
    <property type="match status" value="1"/>
</dbReference>
<dbReference type="Pfam" id="PF00001">
    <property type="entry name" value="7tm_1"/>
    <property type="match status" value="1"/>
</dbReference>
<dbReference type="PRINTS" id="PR00657">
    <property type="entry name" value="CCCHEMOKINER"/>
</dbReference>
<dbReference type="PRINTS" id="PR00645">
    <property type="entry name" value="CXCCHMKINER4"/>
</dbReference>
<dbReference type="PRINTS" id="PR00237">
    <property type="entry name" value="GPCRRHODOPSN"/>
</dbReference>
<dbReference type="SUPFAM" id="SSF81321">
    <property type="entry name" value="Family A G protein-coupled receptor-like"/>
    <property type="match status" value="1"/>
</dbReference>
<dbReference type="PROSITE" id="PS50262">
    <property type="entry name" value="G_PROTEIN_RECEP_F1_2"/>
    <property type="match status" value="1"/>
</dbReference>
<feature type="chain" id="PRO_0000069220" description="Atypical chemokine receptor 2">
    <location>
        <begin position="1"/>
        <end position="378"/>
    </location>
</feature>
<feature type="topological domain" description="Extracellular" evidence="2">
    <location>
        <begin position="1"/>
        <end position="49"/>
    </location>
</feature>
<feature type="transmembrane region" description="Helical; Name=1" evidence="2">
    <location>
        <begin position="50"/>
        <end position="70"/>
    </location>
</feature>
<feature type="topological domain" description="Cytoplasmic" evidence="2">
    <location>
        <begin position="71"/>
        <end position="91"/>
    </location>
</feature>
<feature type="transmembrane region" description="Helical; Name=2" evidence="2">
    <location>
        <begin position="92"/>
        <end position="112"/>
    </location>
</feature>
<feature type="topological domain" description="Extracellular" evidence="2">
    <location>
        <begin position="113"/>
        <end position="117"/>
    </location>
</feature>
<feature type="transmembrane region" description="Helical; Name=3" evidence="2">
    <location>
        <begin position="118"/>
        <end position="139"/>
    </location>
</feature>
<feature type="topological domain" description="Cytoplasmic" evidence="2">
    <location>
        <begin position="140"/>
        <end position="161"/>
    </location>
</feature>
<feature type="transmembrane region" description="Helical; Name=4" evidence="2">
    <location>
        <begin position="162"/>
        <end position="182"/>
    </location>
</feature>
<feature type="topological domain" description="Extracellular" evidence="2">
    <location>
        <begin position="183"/>
        <end position="216"/>
    </location>
</feature>
<feature type="transmembrane region" description="Helical; Name=5" evidence="2">
    <location>
        <begin position="217"/>
        <end position="237"/>
    </location>
</feature>
<feature type="topological domain" description="Cytoplasmic" evidence="2">
    <location>
        <begin position="238"/>
        <end position="249"/>
    </location>
</feature>
<feature type="transmembrane region" description="Helical; Name=6" evidence="2">
    <location>
        <begin position="250"/>
        <end position="270"/>
    </location>
</feature>
<feature type="topological domain" description="Extracellular" evidence="2">
    <location>
        <begin position="271"/>
        <end position="292"/>
    </location>
</feature>
<feature type="transmembrane region" description="Helical; Name=7" evidence="2">
    <location>
        <begin position="293"/>
        <end position="313"/>
    </location>
</feature>
<feature type="topological domain" description="Cytoplasmic" evidence="2">
    <location>
        <begin position="314"/>
        <end position="378"/>
    </location>
</feature>
<feature type="region of interest" description="C-terminal cytoplasmic tail" evidence="1">
    <location>
        <begin position="326"/>
        <end position="378"/>
    </location>
</feature>
<feature type="glycosylation site" description="N-linked (GlcNAc...) asparagine" evidence="2">
    <location>
        <position position="17"/>
    </location>
</feature>
<feature type="disulfide bond" evidence="3">
    <location>
        <begin position="116"/>
        <end position="194"/>
    </location>
</feature>
<feature type="sequence conflict" description="In Ref. 1; CAA73379." evidence="5" ref="1">
    <original>N</original>
    <variation>Y</variation>
    <location>
        <position position="266"/>
    </location>
</feature>
<sequence length="378" mass="43207">MPTVASPLPLTTVGSENSSSIYDYDYLDDMTILVCRKDEVLSFGRVFLPVVYSLIFVLGLAGNLLLLVVLLHSAPRRRTMELYLLNLAVSNLLFVVTMPFWAISVAWHWVFGSFLCKVISTLYSINFYCGIFFITCMSLDKYLEIVHAQPLHRPKAQFRNLLLIVMVWITSLAISVPEMVFVQIHQTLDGVWHCYADFGGHATIWKLYLRFQLNLLGFLLPLLAMIFFYSRIGCVLVRLRPPGQGRALRMAAALVIVFFMLWFPYNLTLFLHSLLDLHVFGNCEISHRLDYTLQVTESLAFSHCCFTPVLYAFCSHRFRRYLKAFLSVMLRWHQAPGTPSSNHSESSRVTAQEDVVSMNDLGERQSEDSLNKGEMGNT</sequence>
<reference key="1">
    <citation type="journal article" date="1997" name="J. Biol. Chem.">
        <title>Cloning and characterization of a novel murine beta chemokine receptor, D6. Comparison to three other related macrophage inflammatory protein-1alpha receptors, CCR-1, CCR-3, and CCR-5.</title>
        <authorList>
            <person name="Nibbs R.J."/>
            <person name="Wylie S.M."/>
            <person name="Pragnell I.B."/>
            <person name="Graham G.J."/>
        </authorList>
    </citation>
    <scope>NUCLEOTIDE SEQUENCE [MRNA]</scope>
    <source>
        <strain>C3H/HeJ</strain>
    </source>
</reference>
<reference key="2">
    <citation type="journal article" date="2005" name="Science">
        <title>The transcriptional landscape of the mammalian genome.</title>
        <authorList>
            <person name="Carninci P."/>
            <person name="Kasukawa T."/>
            <person name="Katayama S."/>
            <person name="Gough J."/>
            <person name="Frith M.C."/>
            <person name="Maeda N."/>
            <person name="Oyama R."/>
            <person name="Ravasi T."/>
            <person name="Lenhard B."/>
            <person name="Wells C."/>
            <person name="Kodzius R."/>
            <person name="Shimokawa K."/>
            <person name="Bajic V.B."/>
            <person name="Brenner S.E."/>
            <person name="Batalov S."/>
            <person name="Forrest A.R."/>
            <person name="Zavolan M."/>
            <person name="Davis M.J."/>
            <person name="Wilming L.G."/>
            <person name="Aidinis V."/>
            <person name="Allen J.E."/>
            <person name="Ambesi-Impiombato A."/>
            <person name="Apweiler R."/>
            <person name="Aturaliya R.N."/>
            <person name="Bailey T.L."/>
            <person name="Bansal M."/>
            <person name="Baxter L."/>
            <person name="Beisel K.W."/>
            <person name="Bersano T."/>
            <person name="Bono H."/>
            <person name="Chalk A.M."/>
            <person name="Chiu K.P."/>
            <person name="Choudhary V."/>
            <person name="Christoffels A."/>
            <person name="Clutterbuck D.R."/>
            <person name="Crowe M.L."/>
            <person name="Dalla E."/>
            <person name="Dalrymple B.P."/>
            <person name="de Bono B."/>
            <person name="Della Gatta G."/>
            <person name="di Bernardo D."/>
            <person name="Down T."/>
            <person name="Engstrom P."/>
            <person name="Fagiolini M."/>
            <person name="Faulkner G."/>
            <person name="Fletcher C.F."/>
            <person name="Fukushima T."/>
            <person name="Furuno M."/>
            <person name="Futaki S."/>
            <person name="Gariboldi M."/>
            <person name="Georgii-Hemming P."/>
            <person name="Gingeras T.R."/>
            <person name="Gojobori T."/>
            <person name="Green R.E."/>
            <person name="Gustincich S."/>
            <person name="Harbers M."/>
            <person name="Hayashi Y."/>
            <person name="Hensch T.K."/>
            <person name="Hirokawa N."/>
            <person name="Hill D."/>
            <person name="Huminiecki L."/>
            <person name="Iacono M."/>
            <person name="Ikeo K."/>
            <person name="Iwama A."/>
            <person name="Ishikawa T."/>
            <person name="Jakt M."/>
            <person name="Kanapin A."/>
            <person name="Katoh M."/>
            <person name="Kawasawa Y."/>
            <person name="Kelso J."/>
            <person name="Kitamura H."/>
            <person name="Kitano H."/>
            <person name="Kollias G."/>
            <person name="Krishnan S.P."/>
            <person name="Kruger A."/>
            <person name="Kummerfeld S.K."/>
            <person name="Kurochkin I.V."/>
            <person name="Lareau L.F."/>
            <person name="Lazarevic D."/>
            <person name="Lipovich L."/>
            <person name="Liu J."/>
            <person name="Liuni S."/>
            <person name="McWilliam S."/>
            <person name="Madan Babu M."/>
            <person name="Madera M."/>
            <person name="Marchionni L."/>
            <person name="Matsuda H."/>
            <person name="Matsuzawa S."/>
            <person name="Miki H."/>
            <person name="Mignone F."/>
            <person name="Miyake S."/>
            <person name="Morris K."/>
            <person name="Mottagui-Tabar S."/>
            <person name="Mulder N."/>
            <person name="Nakano N."/>
            <person name="Nakauchi H."/>
            <person name="Ng P."/>
            <person name="Nilsson R."/>
            <person name="Nishiguchi S."/>
            <person name="Nishikawa S."/>
            <person name="Nori F."/>
            <person name="Ohara O."/>
            <person name="Okazaki Y."/>
            <person name="Orlando V."/>
            <person name="Pang K.C."/>
            <person name="Pavan W.J."/>
            <person name="Pavesi G."/>
            <person name="Pesole G."/>
            <person name="Petrovsky N."/>
            <person name="Piazza S."/>
            <person name="Reed J."/>
            <person name="Reid J.F."/>
            <person name="Ring B.Z."/>
            <person name="Ringwald M."/>
            <person name="Rost B."/>
            <person name="Ruan Y."/>
            <person name="Salzberg S.L."/>
            <person name="Sandelin A."/>
            <person name="Schneider C."/>
            <person name="Schoenbach C."/>
            <person name="Sekiguchi K."/>
            <person name="Semple C.A."/>
            <person name="Seno S."/>
            <person name="Sessa L."/>
            <person name="Sheng Y."/>
            <person name="Shibata Y."/>
            <person name="Shimada H."/>
            <person name="Shimada K."/>
            <person name="Silva D."/>
            <person name="Sinclair B."/>
            <person name="Sperling S."/>
            <person name="Stupka E."/>
            <person name="Sugiura K."/>
            <person name="Sultana R."/>
            <person name="Takenaka Y."/>
            <person name="Taki K."/>
            <person name="Tammoja K."/>
            <person name="Tan S.L."/>
            <person name="Tang S."/>
            <person name="Taylor M.S."/>
            <person name="Tegner J."/>
            <person name="Teichmann S.A."/>
            <person name="Ueda H.R."/>
            <person name="van Nimwegen E."/>
            <person name="Verardo R."/>
            <person name="Wei C.L."/>
            <person name="Yagi K."/>
            <person name="Yamanishi H."/>
            <person name="Zabarovsky E."/>
            <person name="Zhu S."/>
            <person name="Zimmer A."/>
            <person name="Hide W."/>
            <person name="Bult C."/>
            <person name="Grimmond S.M."/>
            <person name="Teasdale R.D."/>
            <person name="Liu E.T."/>
            <person name="Brusic V."/>
            <person name="Quackenbush J."/>
            <person name="Wahlestedt C."/>
            <person name="Mattick J.S."/>
            <person name="Hume D.A."/>
            <person name="Kai C."/>
            <person name="Sasaki D."/>
            <person name="Tomaru Y."/>
            <person name="Fukuda S."/>
            <person name="Kanamori-Katayama M."/>
            <person name="Suzuki M."/>
            <person name="Aoki J."/>
            <person name="Arakawa T."/>
            <person name="Iida J."/>
            <person name="Imamura K."/>
            <person name="Itoh M."/>
            <person name="Kato T."/>
            <person name="Kawaji H."/>
            <person name="Kawagashira N."/>
            <person name="Kawashima T."/>
            <person name="Kojima M."/>
            <person name="Kondo S."/>
            <person name="Konno H."/>
            <person name="Nakano K."/>
            <person name="Ninomiya N."/>
            <person name="Nishio T."/>
            <person name="Okada M."/>
            <person name="Plessy C."/>
            <person name="Shibata K."/>
            <person name="Shiraki T."/>
            <person name="Suzuki S."/>
            <person name="Tagami M."/>
            <person name="Waki K."/>
            <person name="Watahiki A."/>
            <person name="Okamura-Oho Y."/>
            <person name="Suzuki H."/>
            <person name="Kawai J."/>
            <person name="Hayashizaki Y."/>
        </authorList>
    </citation>
    <scope>NUCLEOTIDE SEQUENCE [LARGE SCALE MRNA]</scope>
    <source>
        <strain>C57BL/6J</strain>
        <strain>NOD</strain>
    </source>
</reference>
<reference key="3">
    <citation type="submission" date="2005-09" db="EMBL/GenBank/DDBJ databases">
        <authorList>
            <person name="Mural R.J."/>
            <person name="Adams M.D."/>
            <person name="Myers E.W."/>
            <person name="Smith H.O."/>
            <person name="Venter J.C."/>
        </authorList>
    </citation>
    <scope>NUCLEOTIDE SEQUENCE [LARGE SCALE GENOMIC DNA]</scope>
</reference>
<reference key="4">
    <citation type="journal article" date="2004" name="Genome Res.">
        <title>The status, quality, and expansion of the NIH full-length cDNA project: the Mammalian Gene Collection (MGC).</title>
        <authorList>
            <consortium name="The MGC Project Team"/>
        </authorList>
    </citation>
    <scope>NUCLEOTIDE SEQUENCE [LARGE SCALE MRNA]</scope>
</reference>
<reference key="5">
    <citation type="journal article" date="2012" name="FASEB J.">
        <title>The atypical chemokine receptor D6 controls macrophage efferocytosis and cytokine secretion during the resolution of inflammation.</title>
        <authorList>
            <person name="Pashover-Schallinger E."/>
            <person name="Aswad M."/>
            <person name="Schif-Zuck S."/>
            <person name="Shapiro H."/>
            <person name="Singer P."/>
            <person name="Ariel A."/>
        </authorList>
    </citation>
    <scope>FUNCTION</scope>
    <scope>TISSUE SPECIFICITY</scope>
</reference>
<reference key="6">
    <citation type="journal article" date="2013" name="J. Pathol.">
        <title>Regulation of the immune and inflammatory responses by the 'atypical' chemokine receptor D6.</title>
        <authorList>
            <person name="Graham G.J."/>
            <person name="Locati M."/>
        </authorList>
    </citation>
    <scope>REVIEW</scope>
</reference>
<name>ACKR2_MOUSE</name>
<protein>
    <recommendedName>
        <fullName>Atypical chemokine receptor 2</fullName>
    </recommendedName>
    <alternativeName>
        <fullName>C-C chemokine receptor D6</fullName>
    </alternativeName>
    <alternativeName>
        <fullName>Chemokine-binding protein 2</fullName>
    </alternativeName>
    <alternativeName>
        <fullName>Chemokine-binding protein D6</fullName>
    </alternativeName>
</protein>
<comment type="function">
    <text evidence="4">Atypical chemokine receptor that controls chemokine levels and localization via high-affinity chemokine binding that is uncoupled from classic ligand-driven signal transduction cascades, resulting instead in chemokine sequestration, degradation, or transcytosis. Also known as interceptor (internalizing receptor) or chemokine-scavenging receptor or chemokine decoy receptor. Acts as a receptor for chemokines including CCL2, CCL3, CCL3L1, CCL4, CCL5, CCL7, CCL8, CCL11, CCL13, CCL17, CCL22, CCL23, CCL24, SCYA2/MCP-1, SCY3/MIP-1-alpha, SCYA5/RANTES and SCYA7/MCP-3. Upon active ligand stimulation, activates a beta-arrestin 1 (ARRB1)-dependent, G protein-independent signaling pathway that results in the phosphorylation of the actin-binding protein cofilin (CFL1) through a RAC1-PAK1-LIMK1 signaling pathway. Activation of this pathway results in up-regulation of ACKR2 from endosomal compartment to cell membrane, increasing its efficiency in chemokine uptake and degradation. By scavenging chemokines in tissues, on the surfaces of lymphatic vessels, and in placenta, plays an essential role in the resolution (termination) of the inflammatory response and in the regulation of adaptive immune responses. Plays a major role in the immune silencing of macrophages during the resolution of inflammation. Acts as a regulator of inflammatory leukocyte interactions with lymphatic endothelial cells (LECs) and is required for immature/mature dendritic cells discrimination by LECs.</text>
</comment>
<comment type="subcellular location">
    <subcellularLocation>
        <location evidence="1">Early endosome</location>
    </subcellularLocation>
    <subcellularLocation>
        <location evidence="1">Recycling endosome</location>
    </subcellularLocation>
    <subcellularLocation>
        <location>Cell membrane</location>
        <topology>Multi-pass membrane protein</topology>
    </subcellularLocation>
    <text evidence="1">Predominantly localizes to endocytic vesicles, and upon stimulation by the ligand is internalized via clathrin-coated pits. Once internalized, the ligand dissociates from the receptor, and is targeted to degradation while the receptor is recycled back to the cell membrane (By similarity).</text>
</comment>
<comment type="tissue specificity">
    <text evidence="4">Expressed on apoptotic neutrophils (at protein level).</text>
</comment>
<comment type="domain">
    <text evidence="1">The C-terminal cytoplasmic tail controls its phosphorylation, stability, intracellular trafficking itinerary, and chemokine scavenging properties.</text>
</comment>
<comment type="PTM">
    <text evidence="1">Phosphorylated on serine residues in the C-terminal cytoplasmic tail.</text>
</comment>
<comment type="similarity">
    <text evidence="3">Belongs to the G-protein coupled receptor 1 family. Atypical chemokine receptor subfamily.</text>
</comment>
<organism>
    <name type="scientific">Mus musculus</name>
    <name type="common">Mouse</name>
    <dbReference type="NCBI Taxonomy" id="10090"/>
    <lineage>
        <taxon>Eukaryota</taxon>
        <taxon>Metazoa</taxon>
        <taxon>Chordata</taxon>
        <taxon>Craniata</taxon>
        <taxon>Vertebrata</taxon>
        <taxon>Euteleostomi</taxon>
        <taxon>Mammalia</taxon>
        <taxon>Eutheria</taxon>
        <taxon>Euarchontoglires</taxon>
        <taxon>Glires</taxon>
        <taxon>Rodentia</taxon>
        <taxon>Myomorpha</taxon>
        <taxon>Muroidea</taxon>
        <taxon>Muridae</taxon>
        <taxon>Murinae</taxon>
        <taxon>Mus</taxon>
        <taxon>Mus</taxon>
    </lineage>
</organism>
<evidence type="ECO:0000250" key="1"/>
<evidence type="ECO:0000255" key="2"/>
<evidence type="ECO:0000255" key="3">
    <source>
        <dbReference type="PROSITE-ProRule" id="PRU00521"/>
    </source>
</evidence>
<evidence type="ECO:0000269" key="4">
    <source>
    </source>
</evidence>
<evidence type="ECO:0000305" key="5"/>
<gene>
    <name type="primary">Ackr2</name>
    <name type="synonym">Ccbp2</name>
    <name type="synonym">D6</name>
</gene>
<proteinExistence type="evidence at protein level"/>
<keyword id="KW-1003">Cell membrane</keyword>
<keyword id="KW-1015">Disulfide bond</keyword>
<keyword id="KW-0967">Endosome</keyword>
<keyword id="KW-0297">G-protein coupled receptor</keyword>
<keyword id="KW-0325">Glycoprotein</keyword>
<keyword id="KW-0395">Inflammatory response</keyword>
<keyword id="KW-0472">Membrane</keyword>
<keyword id="KW-0597">Phosphoprotein</keyword>
<keyword id="KW-0675">Receptor</keyword>
<keyword id="KW-1185">Reference proteome</keyword>
<keyword id="KW-0807">Transducer</keyword>
<keyword id="KW-0812">Transmembrane</keyword>
<keyword id="KW-1133">Transmembrane helix</keyword>
<accession>O08707</accession>
<accession>Q8CEG1</accession>